<reference key="1">
    <citation type="journal article" date="2007" name="J. Bacteriol.">
        <title>Genome sequence and analysis of the soil cellulolytic actinomycete Thermobifida fusca YX.</title>
        <authorList>
            <person name="Lykidis A."/>
            <person name="Mavromatis K."/>
            <person name="Ivanova N."/>
            <person name="Anderson I."/>
            <person name="Land M."/>
            <person name="DiBartolo G."/>
            <person name="Martinez M."/>
            <person name="Lapidus A."/>
            <person name="Lucas S."/>
            <person name="Copeland A."/>
            <person name="Richardson P."/>
            <person name="Wilson D.B."/>
            <person name="Kyrpides N."/>
        </authorList>
    </citation>
    <scope>NUCLEOTIDE SEQUENCE [LARGE SCALE GENOMIC DNA]</scope>
    <source>
        <strain>YX</strain>
    </source>
</reference>
<name>RL31_THEFY</name>
<gene>
    <name evidence="1" type="primary">rpmE</name>
    <name type="ordered locus">Tfu_2420</name>
</gene>
<keyword id="KW-0479">Metal-binding</keyword>
<keyword id="KW-0687">Ribonucleoprotein</keyword>
<keyword id="KW-0689">Ribosomal protein</keyword>
<keyword id="KW-0694">RNA-binding</keyword>
<keyword id="KW-0699">rRNA-binding</keyword>
<keyword id="KW-0862">Zinc</keyword>
<dbReference type="EMBL" id="CP000088">
    <property type="protein sequence ID" value="AAZ56453.1"/>
    <property type="molecule type" value="Genomic_DNA"/>
</dbReference>
<dbReference type="RefSeq" id="WP_011292843.1">
    <property type="nucleotide sequence ID" value="NC_007333.1"/>
</dbReference>
<dbReference type="SMR" id="Q47M69"/>
<dbReference type="STRING" id="269800.Tfu_2420"/>
<dbReference type="KEGG" id="tfu:Tfu_2420"/>
<dbReference type="eggNOG" id="COG0254">
    <property type="taxonomic scope" value="Bacteria"/>
</dbReference>
<dbReference type="HOGENOM" id="CLU_114306_4_3_11"/>
<dbReference type="OrthoDB" id="9803251at2"/>
<dbReference type="GO" id="GO:1990904">
    <property type="term" value="C:ribonucleoprotein complex"/>
    <property type="evidence" value="ECO:0007669"/>
    <property type="project" value="UniProtKB-KW"/>
</dbReference>
<dbReference type="GO" id="GO:0005840">
    <property type="term" value="C:ribosome"/>
    <property type="evidence" value="ECO:0007669"/>
    <property type="project" value="UniProtKB-KW"/>
</dbReference>
<dbReference type="GO" id="GO:0046872">
    <property type="term" value="F:metal ion binding"/>
    <property type="evidence" value="ECO:0007669"/>
    <property type="project" value="UniProtKB-KW"/>
</dbReference>
<dbReference type="GO" id="GO:0019843">
    <property type="term" value="F:rRNA binding"/>
    <property type="evidence" value="ECO:0007669"/>
    <property type="project" value="UniProtKB-KW"/>
</dbReference>
<dbReference type="GO" id="GO:0003735">
    <property type="term" value="F:structural constituent of ribosome"/>
    <property type="evidence" value="ECO:0007669"/>
    <property type="project" value="InterPro"/>
</dbReference>
<dbReference type="GO" id="GO:0006412">
    <property type="term" value="P:translation"/>
    <property type="evidence" value="ECO:0007669"/>
    <property type="project" value="UniProtKB-UniRule"/>
</dbReference>
<dbReference type="Gene3D" id="4.10.830.30">
    <property type="entry name" value="Ribosomal protein L31"/>
    <property type="match status" value="1"/>
</dbReference>
<dbReference type="HAMAP" id="MF_00501">
    <property type="entry name" value="Ribosomal_bL31_1"/>
    <property type="match status" value="1"/>
</dbReference>
<dbReference type="InterPro" id="IPR034704">
    <property type="entry name" value="Ribosomal_bL28/bL31-like_sf"/>
</dbReference>
<dbReference type="InterPro" id="IPR002150">
    <property type="entry name" value="Ribosomal_bL31"/>
</dbReference>
<dbReference type="InterPro" id="IPR027491">
    <property type="entry name" value="Ribosomal_bL31_A"/>
</dbReference>
<dbReference type="InterPro" id="IPR042105">
    <property type="entry name" value="Ribosomal_bL31_sf"/>
</dbReference>
<dbReference type="NCBIfam" id="TIGR00105">
    <property type="entry name" value="L31"/>
    <property type="match status" value="1"/>
</dbReference>
<dbReference type="NCBIfam" id="NF000612">
    <property type="entry name" value="PRK00019.1"/>
    <property type="match status" value="1"/>
</dbReference>
<dbReference type="NCBIfam" id="NF001809">
    <property type="entry name" value="PRK00528.1"/>
    <property type="match status" value="1"/>
</dbReference>
<dbReference type="PANTHER" id="PTHR33280">
    <property type="entry name" value="50S RIBOSOMAL PROTEIN L31, CHLOROPLASTIC"/>
    <property type="match status" value="1"/>
</dbReference>
<dbReference type="PANTHER" id="PTHR33280:SF1">
    <property type="entry name" value="LARGE RIBOSOMAL SUBUNIT PROTEIN BL31C"/>
    <property type="match status" value="1"/>
</dbReference>
<dbReference type="Pfam" id="PF01197">
    <property type="entry name" value="Ribosomal_L31"/>
    <property type="match status" value="1"/>
</dbReference>
<dbReference type="PRINTS" id="PR01249">
    <property type="entry name" value="RIBOSOMALL31"/>
</dbReference>
<dbReference type="SUPFAM" id="SSF143800">
    <property type="entry name" value="L28p-like"/>
    <property type="match status" value="1"/>
</dbReference>
<dbReference type="PROSITE" id="PS01143">
    <property type="entry name" value="RIBOSOMAL_L31"/>
    <property type="match status" value="1"/>
</dbReference>
<organism>
    <name type="scientific">Thermobifida fusca (strain YX)</name>
    <dbReference type="NCBI Taxonomy" id="269800"/>
    <lineage>
        <taxon>Bacteria</taxon>
        <taxon>Bacillati</taxon>
        <taxon>Actinomycetota</taxon>
        <taxon>Actinomycetes</taxon>
        <taxon>Streptosporangiales</taxon>
        <taxon>Nocardiopsidaceae</taxon>
        <taxon>Thermobifida</taxon>
    </lineage>
</organism>
<feature type="chain" id="PRO_0000259240" description="Large ribosomal subunit protein bL31">
    <location>
        <begin position="1"/>
        <end position="69"/>
    </location>
</feature>
<feature type="binding site" evidence="1">
    <location>
        <position position="16"/>
    </location>
    <ligand>
        <name>Zn(2+)</name>
        <dbReference type="ChEBI" id="CHEBI:29105"/>
    </ligand>
</feature>
<feature type="binding site" evidence="1">
    <location>
        <position position="18"/>
    </location>
    <ligand>
        <name>Zn(2+)</name>
        <dbReference type="ChEBI" id="CHEBI:29105"/>
    </ligand>
</feature>
<feature type="binding site" evidence="1">
    <location>
        <position position="38"/>
    </location>
    <ligand>
        <name>Zn(2+)</name>
        <dbReference type="ChEBI" id="CHEBI:29105"/>
    </ligand>
</feature>
<feature type="binding site" evidence="1">
    <location>
        <position position="41"/>
    </location>
    <ligand>
        <name>Zn(2+)</name>
        <dbReference type="ChEBI" id="CHEBI:29105"/>
    </ligand>
</feature>
<sequence length="69" mass="7686">MKPGIHPDYHVTQVTCTCGNSFVTRSTAPNGVIRAEICSSCHPFYTGKQKILDTGGRVARFEKRFGKRK</sequence>
<comment type="function">
    <text evidence="1">Binds the 23S rRNA.</text>
</comment>
<comment type="cofactor">
    <cofactor evidence="1">
        <name>Zn(2+)</name>
        <dbReference type="ChEBI" id="CHEBI:29105"/>
    </cofactor>
    <text evidence="1">Binds 1 zinc ion per subunit.</text>
</comment>
<comment type="subunit">
    <text evidence="1">Part of the 50S ribosomal subunit.</text>
</comment>
<comment type="similarity">
    <text evidence="1">Belongs to the bacterial ribosomal protein bL31 family. Type A subfamily.</text>
</comment>
<protein>
    <recommendedName>
        <fullName evidence="1">Large ribosomal subunit protein bL31</fullName>
    </recommendedName>
    <alternativeName>
        <fullName evidence="2">50S ribosomal protein L31</fullName>
    </alternativeName>
</protein>
<proteinExistence type="inferred from homology"/>
<evidence type="ECO:0000255" key="1">
    <source>
        <dbReference type="HAMAP-Rule" id="MF_00501"/>
    </source>
</evidence>
<evidence type="ECO:0000305" key="2"/>
<accession>Q47M69</accession>